<accession>Q4QLG9</accession>
<proteinExistence type="inferred from homology"/>
<feature type="chain" id="PRO_0000230954" description="Transaldolase">
    <location>
        <begin position="1"/>
        <end position="317"/>
    </location>
</feature>
<feature type="active site" description="Schiff-base intermediate with substrate" evidence="2">
    <location>
        <position position="132"/>
    </location>
</feature>
<name>TAL_HAEI8</name>
<gene>
    <name evidence="2" type="primary">tal</name>
    <name type="ordered locus">NTHI1293</name>
</gene>
<reference key="1">
    <citation type="journal article" date="2005" name="J. Bacteriol.">
        <title>Genomic sequence of an otitis media isolate of nontypeable Haemophilus influenzae: comparative study with H. influenzae serotype d, strain KW20.</title>
        <authorList>
            <person name="Harrison A."/>
            <person name="Dyer D.W."/>
            <person name="Gillaspy A."/>
            <person name="Ray W.C."/>
            <person name="Mungur R."/>
            <person name="Carson M.B."/>
            <person name="Zhong H."/>
            <person name="Gipson J."/>
            <person name="Gipson M."/>
            <person name="Johnson L.S."/>
            <person name="Lewis L."/>
            <person name="Bakaletz L.O."/>
            <person name="Munson R.S. Jr."/>
        </authorList>
    </citation>
    <scope>NUCLEOTIDE SEQUENCE [LARGE SCALE GENOMIC DNA]</scope>
    <source>
        <strain>86-028NP</strain>
    </source>
</reference>
<comment type="function">
    <text evidence="2">Transaldolase is important for the balance of metabolites in the pentose-phosphate pathway.</text>
</comment>
<comment type="catalytic activity">
    <reaction evidence="2">
        <text>D-sedoheptulose 7-phosphate + D-glyceraldehyde 3-phosphate = D-erythrose 4-phosphate + beta-D-fructose 6-phosphate</text>
        <dbReference type="Rhea" id="RHEA:17053"/>
        <dbReference type="ChEBI" id="CHEBI:16897"/>
        <dbReference type="ChEBI" id="CHEBI:57483"/>
        <dbReference type="ChEBI" id="CHEBI:57634"/>
        <dbReference type="ChEBI" id="CHEBI:59776"/>
        <dbReference type="EC" id="2.2.1.2"/>
    </reaction>
</comment>
<comment type="pathway">
    <text evidence="2">Carbohydrate degradation; pentose phosphate pathway; D-glyceraldehyde 3-phosphate and beta-D-fructose 6-phosphate from D-ribose 5-phosphate and D-xylulose 5-phosphate (non-oxidative stage): step 2/3.</text>
</comment>
<comment type="subunit">
    <text evidence="1">Homodimer.</text>
</comment>
<comment type="subcellular location">
    <subcellularLocation>
        <location evidence="2">Cytoplasm</location>
    </subcellularLocation>
</comment>
<comment type="similarity">
    <text evidence="2">Belongs to the transaldolase family. Type 1 subfamily.</text>
</comment>
<organism>
    <name type="scientific">Haemophilus influenzae (strain 86-028NP)</name>
    <dbReference type="NCBI Taxonomy" id="281310"/>
    <lineage>
        <taxon>Bacteria</taxon>
        <taxon>Pseudomonadati</taxon>
        <taxon>Pseudomonadota</taxon>
        <taxon>Gammaproteobacteria</taxon>
        <taxon>Pasteurellales</taxon>
        <taxon>Pasteurellaceae</taxon>
        <taxon>Haemophilus</taxon>
    </lineage>
</organism>
<protein>
    <recommendedName>
        <fullName evidence="2">Transaldolase</fullName>
        <ecNumber evidence="2">2.2.1.2</ecNumber>
    </recommendedName>
</protein>
<keyword id="KW-0963">Cytoplasm</keyword>
<keyword id="KW-0570">Pentose shunt</keyword>
<keyword id="KW-0704">Schiff base</keyword>
<keyword id="KW-0808">Transferase</keyword>
<sequence>MTTQLDSLRNMTVVVADTGDIDAIKKYQPQDATTNPSLILSASALPQYAPLIDEAVAYAKAQSNDKAQQLIDAEDKLAVNIGLEILKIVPGRISTEVDARLSYNTQATVEKARKLIALYNAAGISNDRILIKIASTWQGIRAAEILEKEGINCNLTLLFSEAQARACAEAGVYLISPFVGRILDWYKANSDKKEYAPAEDPGVISVTKIYNYYKEYGYNTVVMGASFRNVGEITELAGCDRLTIAPALLKELQENSTALIRKLEYKGEVKAKPQPLTEAEFYWQHNSDAMAVEKLAEGIRKFAIDQEKLETMLSAKL</sequence>
<evidence type="ECO:0000250" key="1"/>
<evidence type="ECO:0000255" key="2">
    <source>
        <dbReference type="HAMAP-Rule" id="MF_00492"/>
    </source>
</evidence>
<dbReference type="EC" id="2.2.1.2" evidence="2"/>
<dbReference type="EMBL" id="CP000057">
    <property type="protein sequence ID" value="AAX88128.1"/>
    <property type="molecule type" value="Genomic_DNA"/>
</dbReference>
<dbReference type="RefSeq" id="WP_011272395.1">
    <property type="nucleotide sequence ID" value="NC_007146.2"/>
</dbReference>
<dbReference type="SMR" id="Q4QLG9"/>
<dbReference type="GeneID" id="93220132"/>
<dbReference type="KEGG" id="hit:NTHI1293"/>
<dbReference type="HOGENOM" id="CLU_047470_0_1_6"/>
<dbReference type="UniPathway" id="UPA00115">
    <property type="reaction ID" value="UER00414"/>
</dbReference>
<dbReference type="Proteomes" id="UP000002525">
    <property type="component" value="Chromosome"/>
</dbReference>
<dbReference type="GO" id="GO:0005829">
    <property type="term" value="C:cytosol"/>
    <property type="evidence" value="ECO:0007669"/>
    <property type="project" value="TreeGrafter"/>
</dbReference>
<dbReference type="GO" id="GO:0004801">
    <property type="term" value="F:transaldolase activity"/>
    <property type="evidence" value="ECO:0000250"/>
    <property type="project" value="UniProtKB"/>
</dbReference>
<dbReference type="GO" id="GO:0005975">
    <property type="term" value="P:carbohydrate metabolic process"/>
    <property type="evidence" value="ECO:0007669"/>
    <property type="project" value="InterPro"/>
</dbReference>
<dbReference type="GO" id="GO:0006098">
    <property type="term" value="P:pentose-phosphate shunt"/>
    <property type="evidence" value="ECO:0007669"/>
    <property type="project" value="UniProtKB-UniRule"/>
</dbReference>
<dbReference type="CDD" id="cd00957">
    <property type="entry name" value="Transaldolase_TalAB"/>
    <property type="match status" value="1"/>
</dbReference>
<dbReference type="FunFam" id="3.20.20.70:FF:000002">
    <property type="entry name" value="Transaldolase"/>
    <property type="match status" value="1"/>
</dbReference>
<dbReference type="Gene3D" id="3.20.20.70">
    <property type="entry name" value="Aldolase class I"/>
    <property type="match status" value="1"/>
</dbReference>
<dbReference type="HAMAP" id="MF_00492">
    <property type="entry name" value="Transaldolase_1"/>
    <property type="match status" value="1"/>
</dbReference>
<dbReference type="InterPro" id="IPR013785">
    <property type="entry name" value="Aldolase_TIM"/>
</dbReference>
<dbReference type="InterPro" id="IPR001585">
    <property type="entry name" value="TAL/FSA"/>
</dbReference>
<dbReference type="InterPro" id="IPR004730">
    <property type="entry name" value="Transaldolase_1"/>
</dbReference>
<dbReference type="InterPro" id="IPR018225">
    <property type="entry name" value="Transaldolase_AS"/>
</dbReference>
<dbReference type="NCBIfam" id="NF009001">
    <property type="entry name" value="PRK12346.1"/>
    <property type="match status" value="1"/>
</dbReference>
<dbReference type="NCBIfam" id="TIGR00874">
    <property type="entry name" value="talAB"/>
    <property type="match status" value="1"/>
</dbReference>
<dbReference type="PANTHER" id="PTHR10683">
    <property type="entry name" value="TRANSALDOLASE"/>
    <property type="match status" value="1"/>
</dbReference>
<dbReference type="PANTHER" id="PTHR10683:SF18">
    <property type="entry name" value="TRANSALDOLASE"/>
    <property type="match status" value="1"/>
</dbReference>
<dbReference type="Pfam" id="PF00923">
    <property type="entry name" value="TAL_FSA"/>
    <property type="match status" value="1"/>
</dbReference>
<dbReference type="SUPFAM" id="SSF51569">
    <property type="entry name" value="Aldolase"/>
    <property type="match status" value="1"/>
</dbReference>
<dbReference type="PROSITE" id="PS01054">
    <property type="entry name" value="TRANSALDOLASE_1"/>
    <property type="match status" value="1"/>
</dbReference>
<dbReference type="PROSITE" id="PS00958">
    <property type="entry name" value="TRANSALDOLASE_2"/>
    <property type="match status" value="1"/>
</dbReference>